<dbReference type="EMBL" id="AF469469">
    <property type="protein sequence ID" value="AAL76273.1"/>
    <property type="molecule type" value="mRNA"/>
</dbReference>
<dbReference type="RefSeq" id="NP_999095.1">
    <property type="nucleotide sequence ID" value="NM_213930.1"/>
</dbReference>
<dbReference type="SMR" id="Q71LE2"/>
<dbReference type="FunCoup" id="Q71LE2">
    <property type="interactions" value="2796"/>
</dbReference>
<dbReference type="STRING" id="9823.ENSSSCP00000018225"/>
<dbReference type="PaxDb" id="9823-ENSSSCP00000018225"/>
<dbReference type="PeptideAtlas" id="Q71LE2"/>
<dbReference type="Ensembl" id="ENSSSCT00000018727.3">
    <property type="protein sequence ID" value="ENSSSCP00000018225.1"/>
    <property type="gene ID" value="ENSSSCG00000017202.3"/>
</dbReference>
<dbReference type="Ensembl" id="ENSSSCT00000098149.1">
    <property type="protein sequence ID" value="ENSSSCP00000077047.1"/>
    <property type="gene ID" value="ENSSSCG00000023971.4"/>
</dbReference>
<dbReference type="Ensembl" id="ENSSSCT00015048919.1">
    <property type="protein sequence ID" value="ENSSSCP00015019468.1"/>
    <property type="gene ID" value="ENSSSCG00015036810.1"/>
</dbReference>
<dbReference type="Ensembl" id="ENSSSCT00015064297.1">
    <property type="protein sequence ID" value="ENSSSCP00015025723.1"/>
    <property type="gene ID" value="ENSSSCG00015048325.1"/>
</dbReference>
<dbReference type="Ensembl" id="ENSSSCT00025050735.1">
    <property type="protein sequence ID" value="ENSSSCP00025021654.1"/>
    <property type="gene ID" value="ENSSSCG00025037271.1"/>
</dbReference>
<dbReference type="Ensembl" id="ENSSSCT00030007018.1">
    <property type="protein sequence ID" value="ENSSSCP00030003156.1"/>
    <property type="gene ID" value="ENSSSCG00030005134.1"/>
</dbReference>
<dbReference type="Ensembl" id="ENSSSCT00035064937.1">
    <property type="protein sequence ID" value="ENSSSCP00035026289.1"/>
    <property type="gene ID" value="ENSSSCG00035048727.1"/>
</dbReference>
<dbReference type="Ensembl" id="ENSSSCT00035071692.1">
    <property type="protein sequence ID" value="ENSSSCP00035029088.1"/>
    <property type="gene ID" value="ENSSSCG00035053743.1"/>
</dbReference>
<dbReference type="Ensembl" id="ENSSSCT00040059852.1">
    <property type="protein sequence ID" value="ENSSSCP00040025085.1"/>
    <property type="gene ID" value="ENSSSCG00040044657.1"/>
</dbReference>
<dbReference type="Ensembl" id="ENSSSCT00040098382.1">
    <property type="protein sequence ID" value="ENSSSCP00040043949.1"/>
    <property type="gene ID" value="ENSSSCG00040071581.1"/>
</dbReference>
<dbReference type="Ensembl" id="ENSSSCT00045050189.1">
    <property type="protein sequence ID" value="ENSSSCP00045034923.1"/>
    <property type="gene ID" value="ENSSSCG00045029396.1"/>
</dbReference>
<dbReference type="Ensembl" id="ENSSSCT00045067034.1">
    <property type="protein sequence ID" value="ENSSSCP00045047599.1"/>
    <property type="gene ID" value="ENSSSCG00045038628.1"/>
</dbReference>
<dbReference type="Ensembl" id="ENSSSCT00050024132.1">
    <property type="protein sequence ID" value="ENSSSCP00050010136.1"/>
    <property type="gene ID" value="ENSSSCG00050017758.1"/>
</dbReference>
<dbReference type="Ensembl" id="ENSSSCT00050096261.1">
    <property type="protein sequence ID" value="ENSSSCP00050041435.1"/>
    <property type="gene ID" value="ENSSSCG00050070605.1"/>
</dbReference>
<dbReference type="Ensembl" id="ENSSSCT00055011710.1">
    <property type="protein sequence ID" value="ENSSSCP00055009273.1"/>
    <property type="gene ID" value="ENSSSCG00055006012.1"/>
</dbReference>
<dbReference type="Ensembl" id="ENSSSCT00055027192.1">
    <property type="protein sequence ID" value="ENSSSCP00055021628.1"/>
    <property type="gene ID" value="ENSSSCG00055013826.1"/>
</dbReference>
<dbReference type="Ensembl" id="ENSSSCT00060039203.1">
    <property type="protein sequence ID" value="ENSSSCP00060016622.1"/>
    <property type="gene ID" value="ENSSSCG00060029017.1"/>
</dbReference>
<dbReference type="Ensembl" id="ENSSSCT00060094570.1">
    <property type="protein sequence ID" value="ENSSSCP00060040897.1"/>
    <property type="gene ID" value="ENSSSCG00060069290.1"/>
</dbReference>
<dbReference type="Ensembl" id="ENSSSCT00065040802.1">
    <property type="protein sequence ID" value="ENSSSCP00065017272.1"/>
    <property type="gene ID" value="ENSSSCG00065030240.1"/>
</dbReference>
<dbReference type="Ensembl" id="ENSSSCT00065076499.1">
    <property type="protein sequence ID" value="ENSSSCP00065033293.1"/>
    <property type="gene ID" value="ENSSSCG00065055858.1"/>
</dbReference>
<dbReference type="Ensembl" id="ENSSSCT00070014391.1">
    <property type="protein sequence ID" value="ENSSSCP00070011879.1"/>
    <property type="gene ID" value="ENSSSCG00070007464.1"/>
</dbReference>
<dbReference type="Ensembl" id="ENSSSCT00070014394.1">
    <property type="protein sequence ID" value="ENSSSCP00070011882.1"/>
    <property type="gene ID" value="ENSSSCG00070007464.1"/>
</dbReference>
<dbReference type="Ensembl" id="ENSSSCT00070041207.1">
    <property type="protein sequence ID" value="ENSSSCP00070034596.1"/>
    <property type="gene ID" value="ENSSSCG00070020711.1"/>
</dbReference>
<dbReference type="Ensembl" id="ENSSSCT00085005255">
    <property type="protein sequence ID" value="ENSSSCP00085003774"/>
    <property type="gene ID" value="ENSSSCG00085002953"/>
</dbReference>
<dbReference type="Ensembl" id="ENSSSCT00085027323">
    <property type="protein sequence ID" value="ENSSSCP00085018719"/>
    <property type="gene ID" value="ENSSSCG00085014503"/>
</dbReference>
<dbReference type="Ensembl" id="ENSSSCT00090006962">
    <property type="protein sequence ID" value="ENSSSCP00090004198"/>
    <property type="gene ID" value="ENSSSCG00090004009"/>
</dbReference>
<dbReference type="Ensembl" id="ENSSSCT00105035680">
    <property type="protein sequence ID" value="ENSSSCP00105024853"/>
    <property type="gene ID" value="ENSSSCG00105018582"/>
</dbReference>
<dbReference type="Ensembl" id="ENSSSCT00105036421">
    <property type="protein sequence ID" value="ENSSSCP00105025319"/>
    <property type="gene ID" value="ENSSSCG00105019012"/>
</dbReference>
<dbReference type="Ensembl" id="ENSSSCT00110041785">
    <property type="protein sequence ID" value="ENSSSCP00110029298"/>
    <property type="gene ID" value="ENSSSCG00110021557"/>
</dbReference>
<dbReference type="Ensembl" id="ENSSSCT00110060247">
    <property type="protein sequence ID" value="ENSSSCP00110042117"/>
    <property type="gene ID" value="ENSSSCG00110031533"/>
</dbReference>
<dbReference type="Ensembl" id="ENSSSCT00115020018">
    <property type="protein sequence ID" value="ENSSSCP00115018951"/>
    <property type="gene ID" value="ENSSSCG00115011601"/>
</dbReference>
<dbReference type="Ensembl" id="ENSSSCT00115023417">
    <property type="protein sequence ID" value="ENSSSCP00115022193"/>
    <property type="gene ID" value="ENSSSCG00115013513"/>
</dbReference>
<dbReference type="Ensembl" id="ENSSSCT00130003973">
    <property type="protein sequence ID" value="ENSSSCP00130002906"/>
    <property type="gene ID" value="ENSSSCG00130002021"/>
</dbReference>
<dbReference type="Ensembl" id="ENSSSCT00130077156">
    <property type="protein sequence ID" value="ENSSSCP00130055227"/>
    <property type="gene ID" value="ENSSSCG00130039751"/>
</dbReference>
<dbReference type="GeneID" id="396970"/>
<dbReference type="KEGG" id="ssc:100521680"/>
<dbReference type="KEGG" id="ssc:396970"/>
<dbReference type="CTD" id="3020"/>
<dbReference type="CTD" id="3021"/>
<dbReference type="VGNC" id="VGNC:109834">
    <property type="gene designation" value="H3-3A"/>
</dbReference>
<dbReference type="VGNC" id="VGNC:109832">
    <property type="gene designation" value="H3-3B"/>
</dbReference>
<dbReference type="eggNOG" id="KOG1745">
    <property type="taxonomic scope" value="Eukaryota"/>
</dbReference>
<dbReference type="GeneTree" id="ENSGT01110000267215"/>
<dbReference type="HOGENOM" id="CLU_078295_4_0_1"/>
<dbReference type="InParanoid" id="Q71LE2"/>
<dbReference type="OrthoDB" id="9845771at2759"/>
<dbReference type="TreeFam" id="TF314241"/>
<dbReference type="Reactome" id="R-SSC-212300">
    <property type="pathway name" value="PRC2 methylates histones and DNA"/>
</dbReference>
<dbReference type="Reactome" id="R-SSC-2559580">
    <property type="pathway name" value="Oxidative Stress Induced Senescence"/>
</dbReference>
<dbReference type="Reactome" id="R-SSC-2559582">
    <property type="pathway name" value="Senescence-Associated Secretory Phenotype (SASP)"/>
</dbReference>
<dbReference type="Reactome" id="R-SSC-427359">
    <property type="pathway name" value="SIRT1 negatively regulates rRNA expression"/>
</dbReference>
<dbReference type="Reactome" id="R-SSC-427413">
    <property type="pathway name" value="NoRC negatively regulates rRNA expression"/>
</dbReference>
<dbReference type="Reactome" id="R-SSC-5250924">
    <property type="pathway name" value="B-WICH complex positively regulates rRNA expression"/>
</dbReference>
<dbReference type="Reactome" id="R-SSC-5578749">
    <property type="pathway name" value="Transcriptional regulation by small RNAs"/>
</dbReference>
<dbReference type="Reactome" id="R-SSC-5625886">
    <property type="pathway name" value="Activated PKN1 stimulates transcription of AR (androgen receptor) regulated genes KLK2 and KLK3"/>
</dbReference>
<dbReference type="Reactome" id="R-SSC-68616">
    <property type="pathway name" value="Assembly of the ORC complex at the origin of replication"/>
</dbReference>
<dbReference type="Reactome" id="R-SSC-73728">
    <property type="pathway name" value="RNA Polymerase I Promoter Opening"/>
</dbReference>
<dbReference type="Reactome" id="R-SSC-73772">
    <property type="pathway name" value="RNA Polymerase I Promoter Escape"/>
</dbReference>
<dbReference type="Reactome" id="R-SSC-8936459">
    <property type="pathway name" value="RUNX1 regulates genes involved in megakaryocyte differentiation and platelet function"/>
</dbReference>
<dbReference type="Reactome" id="R-SSC-9018519">
    <property type="pathway name" value="Estrogen-dependent gene expression"/>
</dbReference>
<dbReference type="Reactome" id="R-SSC-983231">
    <property type="pathway name" value="Factors involved in megakaryocyte development and platelet production"/>
</dbReference>
<dbReference type="Reactome" id="R-SSC-9841922">
    <property type="pathway name" value="MLL4 and MLL3 complexes regulate expression of PPARG target genes in adipogenesis and hepatic steatosis"/>
</dbReference>
<dbReference type="Reactome" id="R-SSC-9843940">
    <property type="pathway name" value="Regulation of endogenous retroelements by KRAB-ZFP proteins"/>
</dbReference>
<dbReference type="Reactome" id="R-SSC-9843970">
    <property type="pathway name" value="Regulation of endogenous retroelements by the Human Silencing Hub (HUSH) complex"/>
</dbReference>
<dbReference type="Proteomes" id="UP000008227">
    <property type="component" value="Chromosome 10"/>
</dbReference>
<dbReference type="Proteomes" id="UP000008227">
    <property type="component" value="Chromosome 12"/>
</dbReference>
<dbReference type="Proteomes" id="UP000314985">
    <property type="component" value="Chromosome 12"/>
</dbReference>
<dbReference type="Proteomes" id="UP000314985">
    <property type="component" value="Unassembled WGS sequence"/>
</dbReference>
<dbReference type="Proteomes" id="UP000694570">
    <property type="component" value="Unplaced"/>
</dbReference>
<dbReference type="Proteomes" id="UP000694571">
    <property type="component" value="Unplaced"/>
</dbReference>
<dbReference type="Proteomes" id="UP000694720">
    <property type="component" value="Unplaced"/>
</dbReference>
<dbReference type="Proteomes" id="UP000694722">
    <property type="component" value="Unplaced"/>
</dbReference>
<dbReference type="Proteomes" id="UP000694723">
    <property type="component" value="Unplaced"/>
</dbReference>
<dbReference type="Proteomes" id="UP000694724">
    <property type="component" value="Unplaced"/>
</dbReference>
<dbReference type="Proteomes" id="UP000694725">
    <property type="component" value="Unplaced"/>
</dbReference>
<dbReference type="Proteomes" id="UP000694726">
    <property type="component" value="Unplaced"/>
</dbReference>
<dbReference type="Proteomes" id="UP000694727">
    <property type="component" value="Unplaced"/>
</dbReference>
<dbReference type="Proteomes" id="UP000694728">
    <property type="component" value="Unplaced"/>
</dbReference>
<dbReference type="Bgee" id="ENSSSCG00000017202">
    <property type="expression patterns" value="Expressed in granulosa cell and 42 other cell types or tissues"/>
</dbReference>
<dbReference type="ExpressionAtlas" id="Q71LE2">
    <property type="expression patterns" value="baseline and differential"/>
</dbReference>
<dbReference type="GO" id="GO:0001740">
    <property type="term" value="C:Barr body"/>
    <property type="evidence" value="ECO:0007669"/>
    <property type="project" value="Ensembl"/>
</dbReference>
<dbReference type="GO" id="GO:0000781">
    <property type="term" value="C:chromosome, telomeric region"/>
    <property type="evidence" value="ECO:0007669"/>
    <property type="project" value="Ensembl"/>
</dbReference>
<dbReference type="GO" id="GO:0000939">
    <property type="term" value="C:inner kinetochore"/>
    <property type="evidence" value="ECO:0007669"/>
    <property type="project" value="Ensembl"/>
</dbReference>
<dbReference type="GO" id="GO:0005654">
    <property type="term" value="C:nucleoplasm"/>
    <property type="evidence" value="ECO:0007669"/>
    <property type="project" value="Ensembl"/>
</dbReference>
<dbReference type="GO" id="GO:0000786">
    <property type="term" value="C:nucleosome"/>
    <property type="evidence" value="ECO:0007669"/>
    <property type="project" value="UniProtKB-KW"/>
</dbReference>
<dbReference type="GO" id="GO:0005634">
    <property type="term" value="C:nucleus"/>
    <property type="evidence" value="ECO:0000318"/>
    <property type="project" value="GO_Central"/>
</dbReference>
<dbReference type="GO" id="GO:0031492">
    <property type="term" value="F:nucleosomal DNA binding"/>
    <property type="evidence" value="ECO:0007669"/>
    <property type="project" value="Ensembl"/>
</dbReference>
<dbReference type="GO" id="GO:0046982">
    <property type="term" value="F:protein heterodimerization activity"/>
    <property type="evidence" value="ECO:0007669"/>
    <property type="project" value="InterPro"/>
</dbReference>
<dbReference type="GO" id="GO:0000978">
    <property type="term" value="F:RNA polymerase II cis-regulatory region sequence-specific DNA binding"/>
    <property type="evidence" value="ECO:0007669"/>
    <property type="project" value="Ensembl"/>
</dbReference>
<dbReference type="GO" id="GO:0000979">
    <property type="term" value="F:RNA polymerase II core promoter sequence-specific DNA binding"/>
    <property type="evidence" value="ECO:0007669"/>
    <property type="project" value="Ensembl"/>
</dbReference>
<dbReference type="GO" id="GO:0030527">
    <property type="term" value="F:structural constituent of chromatin"/>
    <property type="evidence" value="ECO:0007669"/>
    <property type="project" value="Ensembl"/>
</dbReference>
<dbReference type="GO" id="GO:0008283">
    <property type="term" value="P:cell population proliferation"/>
    <property type="evidence" value="ECO:0007669"/>
    <property type="project" value="Ensembl"/>
</dbReference>
<dbReference type="GO" id="GO:0007566">
    <property type="term" value="P:embryo implantation"/>
    <property type="evidence" value="ECO:0007669"/>
    <property type="project" value="Ensembl"/>
</dbReference>
<dbReference type="GO" id="GO:0008584">
    <property type="term" value="P:male gonad development"/>
    <property type="evidence" value="ECO:0007669"/>
    <property type="project" value="Ensembl"/>
</dbReference>
<dbReference type="GO" id="GO:0035264">
    <property type="term" value="P:multicellular organism growth"/>
    <property type="evidence" value="ECO:0007669"/>
    <property type="project" value="Ensembl"/>
</dbReference>
<dbReference type="GO" id="GO:0042692">
    <property type="term" value="P:muscle cell differentiation"/>
    <property type="evidence" value="ECO:0007669"/>
    <property type="project" value="Ensembl"/>
</dbReference>
<dbReference type="GO" id="GO:1902340">
    <property type="term" value="P:negative regulation of chromosome condensation"/>
    <property type="evidence" value="ECO:0007669"/>
    <property type="project" value="Ensembl"/>
</dbReference>
<dbReference type="GO" id="GO:0006334">
    <property type="term" value="P:nucleosome assembly"/>
    <property type="evidence" value="ECO:0007669"/>
    <property type="project" value="Ensembl"/>
</dbReference>
<dbReference type="GO" id="GO:0006997">
    <property type="term" value="P:nucleus organization"/>
    <property type="evidence" value="ECO:0007669"/>
    <property type="project" value="Ensembl"/>
</dbReference>
<dbReference type="GO" id="GO:0001556">
    <property type="term" value="P:oocyte maturation"/>
    <property type="evidence" value="ECO:0007669"/>
    <property type="project" value="Ensembl"/>
</dbReference>
<dbReference type="GO" id="GO:0001649">
    <property type="term" value="P:osteoblast differentiation"/>
    <property type="evidence" value="ECO:0007669"/>
    <property type="project" value="Ensembl"/>
</dbReference>
<dbReference type="GO" id="GO:0031508">
    <property type="term" value="P:pericentric heterochromatin formation"/>
    <property type="evidence" value="ECO:0007669"/>
    <property type="project" value="Ensembl"/>
</dbReference>
<dbReference type="GO" id="GO:0030307">
    <property type="term" value="P:positive regulation of cell growth"/>
    <property type="evidence" value="ECO:0007669"/>
    <property type="project" value="Ensembl"/>
</dbReference>
<dbReference type="GO" id="GO:0090230">
    <property type="term" value="P:regulation of centromere complex assembly"/>
    <property type="evidence" value="ECO:0007669"/>
    <property type="project" value="Ensembl"/>
</dbReference>
<dbReference type="GO" id="GO:0007338">
    <property type="term" value="P:single fertilization"/>
    <property type="evidence" value="ECO:0007669"/>
    <property type="project" value="Ensembl"/>
</dbReference>
<dbReference type="GO" id="GO:0007286">
    <property type="term" value="P:spermatid development"/>
    <property type="evidence" value="ECO:0007669"/>
    <property type="project" value="Ensembl"/>
</dbReference>
<dbReference type="GO" id="GO:0031509">
    <property type="term" value="P:subtelomeric heterochromatin formation"/>
    <property type="evidence" value="ECO:0007669"/>
    <property type="project" value="Ensembl"/>
</dbReference>
<dbReference type="CDD" id="cd22911">
    <property type="entry name" value="HFD_H3"/>
    <property type="match status" value="1"/>
</dbReference>
<dbReference type="FunFam" id="1.10.20.10:FF:000078">
    <property type="entry name" value="Histone H3"/>
    <property type="match status" value="1"/>
</dbReference>
<dbReference type="FunFam" id="1.10.20.10:FF:000044">
    <property type="entry name" value="Histone H3.3"/>
    <property type="match status" value="1"/>
</dbReference>
<dbReference type="Gene3D" id="1.10.20.10">
    <property type="entry name" value="Histone, subunit A"/>
    <property type="match status" value="1"/>
</dbReference>
<dbReference type="InterPro" id="IPR009072">
    <property type="entry name" value="Histone-fold"/>
</dbReference>
<dbReference type="InterPro" id="IPR007125">
    <property type="entry name" value="Histone_H2A/H2B/H3"/>
</dbReference>
<dbReference type="InterPro" id="IPR000164">
    <property type="entry name" value="Histone_H3/CENP-A"/>
</dbReference>
<dbReference type="PANTHER" id="PTHR11426">
    <property type="entry name" value="HISTONE H3"/>
    <property type="match status" value="1"/>
</dbReference>
<dbReference type="Pfam" id="PF00125">
    <property type="entry name" value="Histone"/>
    <property type="match status" value="1"/>
</dbReference>
<dbReference type="PRINTS" id="PR00622">
    <property type="entry name" value="HISTONEH3"/>
</dbReference>
<dbReference type="SMART" id="SM00428">
    <property type="entry name" value="H3"/>
    <property type="match status" value="1"/>
</dbReference>
<dbReference type="SUPFAM" id="SSF47113">
    <property type="entry name" value="Histone-fold"/>
    <property type="match status" value="1"/>
</dbReference>
<dbReference type="PROSITE" id="PS00322">
    <property type="entry name" value="HISTONE_H3_1"/>
    <property type="match status" value="1"/>
</dbReference>
<dbReference type="PROSITE" id="PS00959">
    <property type="entry name" value="HISTONE_H3_2"/>
    <property type="match status" value="1"/>
</dbReference>
<organism>
    <name type="scientific">Sus scrofa</name>
    <name type="common">Pig</name>
    <dbReference type="NCBI Taxonomy" id="9823"/>
    <lineage>
        <taxon>Eukaryota</taxon>
        <taxon>Metazoa</taxon>
        <taxon>Chordata</taxon>
        <taxon>Craniata</taxon>
        <taxon>Vertebrata</taxon>
        <taxon>Euteleostomi</taxon>
        <taxon>Mammalia</taxon>
        <taxon>Eutheria</taxon>
        <taxon>Laurasiatheria</taxon>
        <taxon>Artiodactyla</taxon>
        <taxon>Suina</taxon>
        <taxon>Suidae</taxon>
        <taxon>Sus</taxon>
    </lineage>
</organism>
<sequence>MARTKQTARKSTGGKAPRKQLATKAARKSAPSTGGVKKPHRYRPGTVALREIRRYQKSTELLIRKLPFQRLVREIAQDFKTDLRFQSAAIGALQEASEAYLVGLFEDTNLCAIHAKRVTIMPKDIQLARRIRGERA</sequence>
<name>H33_PIG</name>
<comment type="function">
    <text evidence="4">Variant histone H3 which replaces conventional H3 in a wide range of nucleosomes in active genes. Constitutes the predominant form of histone H3 in non-dividing cells and is incorporated into chromatin independently of DNA synthesis. Deposited at sites of nucleosomal displacement throughout transcribed genes, suggesting that it represents an epigenetic imprint of transcriptionally active chromatin. Nucleosomes wrap and compact DNA into chromatin, limiting DNA accessibility to the cellular machineries which require DNA as a template. Histones thereby play a central role in transcription regulation, DNA repair, DNA replication and chromosomal stability. DNA accessibility is regulated via a complex set of post-translational modifications of histones, also called histone code, and nucleosome remodeling.</text>
</comment>
<comment type="subunit">
    <text evidence="4">The nucleosome is a histone octamer containing two molecules each of H2A, H2B, H3 and H4 assembled in one H3-H4 heterotetramer and two H2A-H2B heterodimers. The octamer wraps approximately 147 bp of DNA. Interacts with HIRA, a chaperone required for its incorporation into nucleosomes. Interacts with ZMYND11; when trimethylated at 'Lys-36' (H3.3K36me3). Found in a co-chaperone complex with DNJC9, MCM2 and histone H3.3-H4 dimers (By similarity). Within the complex, interacts with DNJC9 (via C-terminus); the interaction is direct (By similarity). Interacts with ASF1A, MCM2, NASP and SPT2 (By similarity). Interacts with DAXX; the interaction is direct (By similarity). Interacts with NASP; NASP is a histone chaperone that stabilizes and maintains a soluble pool of Histone H3-H4 dimers (By similarity).</text>
</comment>
<comment type="subcellular location">
    <subcellularLocation>
        <location evidence="1">Nucleus</location>
    </subcellularLocation>
    <subcellularLocation>
        <location evidence="1">Chromosome</location>
    </subcellularLocation>
</comment>
<comment type="developmental stage">
    <text>Expressed throughout the cell cycle independently of DNA synthesis.</text>
</comment>
<comment type="domain">
    <text evidence="4">Specific interaction of trimethylated form at 'Lys-36' (H3.3K36me3) with ZMYND11 is mediated by the encapsulation of Ser-32 residue with a composite pocket formed by the tandem bromo-PWWP domains (By similarity). Interacts with ZMYND11; when trimethylated at 'Lys-36' (H3.3K36me3).</text>
</comment>
<comment type="PTM">
    <text evidence="4">Acetylation is generally linked to gene activation. Acetylation on Lys-10 (H3K9ac) impairs methylation at Arg-9 (H3R8me2s). Acetylation on Lys-19 (H3K18ac) and Lys-24 (H3K24ac) favors methylation at Arg-18 (H3R17me). Acetylation at Lys-123 (H3K122ac) by EP300/p300 plays a central role in chromatin structure: localizes at the surface of the histone octamer and stimulates transcription, possibly by promoting nucleosome instability.</text>
</comment>
<comment type="PTM">
    <text evidence="4">Citrullination at Arg-9 (H3R8ci) and/or Arg-18 (H3R17ci) by PADI4 impairs methylation and represses transcription.</text>
</comment>
<comment type="PTM">
    <text evidence="4">Asymmetric dimethylation at Arg-18 (H3R17me2a) by CARM1 is linked to gene activation. Symmetric dimethylation at Arg-9 (H3R8me2s) by PRMT5 is linked to gene repression. Asymmetric dimethylation at Arg-3 (H3R2me2a) by PRMT6 is linked to gene repression and is mutually exclusive with H3 Lys-5 methylation (H3K4me2 and H3K4me3). H3R2me2a is present at the 3' of genes regardless of their transcription state and is enriched on inactive promoters, while it is absent on active promoters.</text>
</comment>
<comment type="PTM">
    <text evidence="4">Specifically enriched in modifications associated with active chromatin such as methylation at Lys-5 (H3K4me), Lys-37 and Lys-80. Methylation at Lys-5 (H3K4me) facilitates subsequent acetylation of H3 and H4. Methylation at Lys-80 (H3K79me) is associated with DNA double-strand break (DSB) responses and is a specific target for TP53BP1. Methylation at Lys-10 (H3K9me) and Lys-28 (H3K27me), which are linked to gene repression, are underrepresented. Methylation at Lys-10 (H3K9me) is a specific target for HP1 proteins (CBX1, CBX3 and CBX5) and prevents subsequent phosphorylation at Ser-11 (H3S10ph) and acetylation of H3 and H4. Methylation at Lys-5 (H3K4me) and Lys-80 (H3K79me) require preliminary monoubiquitination of H2B at 'Lys-120'. Methylation at Lys-10 (H3K9me) and Lys-28 (H3K27me) are enriched in inactive X chromosome chromatin. Monomethylation at Lys-57 (H3K56me1) by EHMT2/G9A in G1 phase promotes interaction with PCNA and is required for DNA replication.</text>
</comment>
<comment type="PTM">
    <text evidence="4">Phosphorylated at Thr-4 (H3T3ph) by VRK1 (By similarity). Phosphorylated at Thr-4 (H3T3ph) by HASPIN during prophase and dephosphorylated during anaphase. Phosphorylation at Ser-11 (H3S10ph) by AURKB is crucial for chromosome condensation and cell-cycle progression during mitosis and meiosis. In addition phosphorylation at Ser-11 (H3S10ph) by RPS6KA4 and RPS6KA5 is important during interphase because it enables the transcription of genes following external stimulation, like mitogens, stress, growth factors or UV irradiation and result in the activation of genes, such as c-fos and c-jun. Phosphorylation at Ser-11 (H3S10ph), which is linked to gene activation, prevents methylation at Lys-10 (H3K9me) but facilitates acetylation of H3 and H4. Phosphorylation at Ser-11 (H3S10ph) by AURKB mediates the dissociation of HP1 proteins (CBX1, CBX3 and CBX5) from heterochromatin. Phosphorylation at Ser-11 (H3S10ph) is also an essential regulatory mechanism for neoplastic cell transformation. Phosphorylated at Ser-29 (H3S28ph) by MAP3K20 isoform 1, RPS6KA5 or AURKB during mitosis or upon ultraviolet B irradiation. Phosphorylation at Thr-7 (H3T6ph) by PRKCB is a specific tag for epigenetic transcriptional activation that prevents demethylation of Lys-5 (H3K4me) by LSD1/KDM1A. At centromeres, specifically phosphorylated at Thr-12 (H3T11ph) from prophase to early anaphase, by DAPK3 and PKN1. Phosphorylation at Thr-12 (H3T11ph) by PKN1 or isoform M2 of PKM (PKM2) is a specific tag for epigenetic transcriptional activation that promotes demethylation of Lys-10 (H3K9me) by KDM4C/JMJD2C. Phosphorylation at Tyr-42 (H3Y41ph) by JAK2 promotes exclusion of CBX5 (HP1 alpha) from chromatin. Phosphorylation on Ser-32 (H3S31ph) is specific to regions bordering centromeres in metaphase chromosomes.</text>
</comment>
<comment type="PTM">
    <text evidence="6">Ubiquitinated. Monoubiquitinated by RAG1 in lymphoid cells, monoubiquitination is required for V(D)J recombination (By similarity).</text>
</comment>
<comment type="PTM">
    <text evidence="4">Lysine deamination at Lys-5 (H3K4all) to form allysine is mediated by LOXL2. Allysine formation by LOXL2 only takes place on H3K4me3 and results in gene repression.</text>
</comment>
<comment type="PTM">
    <text evidence="4">Crotonylation (Kcr) is specifically present in male germ cells and marks testis-specific genes in post-meiotic cells, including X-linked genes that escape sex chromosome inactivation in haploid cells. Crotonylation marks active promoters and enhancers and confers resistance to transcriptional repressors. It is also associated with post-meiotically activated genes on autosomes.</text>
</comment>
<comment type="PTM">
    <text evidence="3">Butyrylation of histones marks active promoters and competes with histone acetylation. It is present during late spermatogenesis.</text>
</comment>
<comment type="PTM">
    <text evidence="4">Succinylation at Lys-80 (H3K79succ) by KAT2A takes place with a maximum frequency around the transcription start sites of genes. It gives a specific tag for epigenetic transcription activation. Desuccinylation at Lys-123 (H3K122succ) by SIRT7 in response to DNA damage promotes chromatin condensation and double-strand breaks (DSBs) repair.</text>
</comment>
<comment type="PTM">
    <text evidence="2">Serine ADP-ribosylation by PARP1 or PARP2 constitutes the primary form of ADP-ribosylation of proteins in response to DNA damage. Serine ADP-ribosylation at Ser-11 (H3S10ADPr) promotes recruitment of CHD1L. H3S10ADPr is mutually exclusive with phosphorylation at Ser-11 (H3S10ph) and impairs acetylation at Lys-10 (H3K9ac).</text>
</comment>
<comment type="PTM">
    <text evidence="4">Serotonylated by TGM2 at Gln-6 (H3Q5ser) during serotonergic neuron differentiation (By similarity). H3Q5ser is associated with trimethylation of Lys-5 (H3K4me3) and enhances general transcription factor IID (TFIID) complex-binding to H3K4me3, thereby facilitating transcription (By similarity).</text>
</comment>
<comment type="PTM">
    <text evidence="4 6">Dopaminylated by TGM2 at Gln-6 (H3Q5dop) in ventral tegmental area (VTA) neurons (By similarity). H3Q5dop mediates neurotransmission-independent role of nuclear dopamine by regulating relapse-related transcriptional plasticity in the reward system (By similarity).</text>
</comment>
<comment type="PTM">
    <text evidence="4">Lactylated in macrophages by EP300/P300 by using lactoyl-CoA directly derived from endogenous or exogenous lactate, leading to stimulates gene transcription.</text>
</comment>
<comment type="similarity">
    <text evidence="10">Belongs to the histone H3 family.</text>
</comment>
<accession>Q71LE2</accession>
<proteinExistence type="evidence at transcript level"/>
<feature type="initiator methionine" description="Removed" evidence="10">
    <location>
        <position position="1"/>
    </location>
</feature>
<feature type="chain" id="PRO_0000221253" description="Histone H3.3">
    <location>
        <begin position="2"/>
        <end position="136"/>
    </location>
</feature>
<feature type="region of interest" description="Disordered" evidence="9">
    <location>
        <begin position="1"/>
        <end position="43"/>
    </location>
</feature>
<feature type="site" description="Interaction with ZMYND11" evidence="4">
    <location>
        <position position="32"/>
    </location>
</feature>
<feature type="modified residue" description="Asymmetric dimethylarginine; by PRMT6; alternate" evidence="4">
    <location>
        <position position="3"/>
    </location>
</feature>
<feature type="modified residue" description="Citrulline; alternate" evidence="4">
    <location>
        <position position="3"/>
    </location>
</feature>
<feature type="modified residue" description="Phosphothreonine; by HASPIN and VRK1" evidence="4">
    <location>
        <position position="4"/>
    </location>
</feature>
<feature type="modified residue" description="Allysine; alternate" evidence="4">
    <location>
        <position position="5"/>
    </location>
</feature>
<feature type="modified residue" description="N6,N6,N6-trimethyllysine; alternate" evidence="4">
    <location>
        <position position="5"/>
    </location>
</feature>
<feature type="modified residue" description="N6,N6-dimethyllysine; alternate" evidence="4">
    <location>
        <position position="5"/>
    </location>
</feature>
<feature type="modified residue" description="N6-(2-hydroxyisobutyryl)lysine; alternate" evidence="2">
    <location>
        <position position="5"/>
    </location>
</feature>
<feature type="modified residue" description="N6-(beta-hydroxybutyryl)lysine; alternate" evidence="3">
    <location>
        <position position="5"/>
    </location>
</feature>
<feature type="modified residue" description="N6-acetyllysine; alternate" evidence="4">
    <location>
        <position position="5"/>
    </location>
</feature>
<feature type="modified residue" description="N6-crotonyllysine; alternate" evidence="4">
    <location>
        <position position="5"/>
    </location>
</feature>
<feature type="modified residue" description="N6-methyllysine; alternate" evidence="4">
    <location>
        <position position="5"/>
    </location>
</feature>
<feature type="modified residue" description="5-glutamyl dopamine; alternate" evidence="4">
    <location>
        <position position="6"/>
    </location>
</feature>
<feature type="modified residue" description="5-glutamyl serotonin; alternate" evidence="4">
    <location>
        <position position="6"/>
    </location>
</feature>
<feature type="modified residue" description="Phosphothreonine; by PKC" evidence="4">
    <location>
        <position position="7"/>
    </location>
</feature>
<feature type="modified residue" description="Citrulline; alternate" evidence="4">
    <location>
        <position position="9"/>
    </location>
</feature>
<feature type="modified residue" description="Symmetric dimethylarginine; by PRMT5; alternate" evidence="5">
    <location>
        <position position="9"/>
    </location>
</feature>
<feature type="modified residue" description="N6,N6,N6-trimethyllysine; alternate" evidence="4">
    <location>
        <position position="10"/>
    </location>
</feature>
<feature type="modified residue" description="N6,N6-dimethyllysine; alternate" evidence="4">
    <location>
        <position position="10"/>
    </location>
</feature>
<feature type="modified residue" description="N6-(2-hydroxyisobutyryl)lysine; alternate" evidence="2">
    <location>
        <position position="10"/>
    </location>
</feature>
<feature type="modified residue" description="N6-(beta-hydroxybutyryl)lysine; alternate" evidence="3">
    <location>
        <position position="10"/>
    </location>
</feature>
<feature type="modified residue" description="N6-acetyllysine; alternate" evidence="4">
    <location>
        <position position="10"/>
    </location>
</feature>
<feature type="modified residue" description="N6-crotonyllysine; alternate" evidence="4">
    <location>
        <position position="10"/>
    </location>
</feature>
<feature type="modified residue" description="N6-lactoyllysine; alternate" evidence="4">
    <location>
        <position position="10"/>
    </location>
</feature>
<feature type="modified residue" description="N6-methyllysine; alternate" evidence="4">
    <location>
        <position position="10"/>
    </location>
</feature>
<feature type="modified residue" description="ADP-ribosylserine; alternate" evidence="2">
    <location>
        <position position="11"/>
    </location>
</feature>
<feature type="modified residue" description="Phosphoserine; alternate; by AURKB, AURKC, RPS6KA3, RPS6KA4 and RPS6KA5" evidence="7">
    <location>
        <position position="11"/>
    </location>
</feature>
<feature type="modified residue" description="Phosphothreonine; by PKC" evidence="2">
    <location>
        <position position="12"/>
    </location>
</feature>
<feature type="modified residue" description="N6-(2-hydroxyisobutyryl)lysine; alternate" evidence="2">
    <location>
        <position position="15"/>
    </location>
</feature>
<feature type="modified residue" description="N6-(beta-hydroxybutyryl)lysine; alternate" evidence="3">
    <location>
        <position position="15"/>
    </location>
</feature>
<feature type="modified residue" description="N6-acetyllysine; alternate" evidence="4">
    <location>
        <position position="15"/>
    </location>
</feature>
<feature type="modified residue" description="N6-glutaryllysine; alternate" evidence="4">
    <location>
        <position position="15"/>
    </location>
</feature>
<feature type="modified residue" description="N6-lactoyllysine; alternate" evidence="5">
    <location>
        <position position="15"/>
    </location>
</feature>
<feature type="modified residue" description="N6-succinyllysine; alternate" evidence="4">
    <location>
        <position position="15"/>
    </location>
</feature>
<feature type="modified residue" description="Asymmetric dimethylarginine; by CARM1; alternate" evidence="4">
    <location>
        <position position="18"/>
    </location>
</feature>
<feature type="modified residue" description="Citrulline; alternate" evidence="4">
    <location>
        <position position="18"/>
    </location>
</feature>
<feature type="modified residue" description="N6-(2-hydroxyisobutyryl)lysine; alternate" evidence="2">
    <location>
        <position position="19"/>
    </location>
</feature>
<feature type="modified residue" description="N6-(beta-hydroxybutyryl)lysine; alternate" evidence="3">
    <location>
        <position position="19"/>
    </location>
</feature>
<feature type="modified residue" description="N6-acetyllysine; alternate" evidence="4">
    <location>
        <position position="19"/>
    </location>
</feature>
<feature type="modified residue" description="N6-butyryllysine; alternate" evidence="3">
    <location>
        <position position="19"/>
    </location>
</feature>
<feature type="modified residue" description="N6-crotonyllysine; alternate" evidence="4">
    <location>
        <position position="19"/>
    </location>
</feature>
<feature type="modified residue" description="N6-glutaryllysine; alternate" evidence="4">
    <location>
        <position position="19"/>
    </location>
</feature>
<feature type="modified residue" description="N6-lactoyllysine; alternate" evidence="4">
    <location>
        <position position="19"/>
    </location>
</feature>
<feature type="modified residue" description="N6-methyllysine; alternate" evidence="4">
    <location>
        <position position="19"/>
    </location>
</feature>
<feature type="modified residue" description="N6-(2-hydroxyisobutyryl)lysine; alternate" evidence="2">
    <location>
        <position position="24"/>
    </location>
</feature>
<feature type="modified residue" description="N6-(beta-hydroxybutyryl)lysine; alternate" evidence="3">
    <location>
        <position position="24"/>
    </location>
</feature>
<feature type="modified residue" description="N6-acetyllysine; alternate" evidence="4">
    <location>
        <position position="24"/>
    </location>
</feature>
<feature type="modified residue" description="N6-butyryllysine; alternate" evidence="3">
    <location>
        <position position="24"/>
    </location>
</feature>
<feature type="modified residue" description="N6-crotonyllysine; alternate" evidence="4">
    <location>
        <position position="24"/>
    </location>
</feature>
<feature type="modified residue" description="N6-glutaryllysine; alternate" evidence="4">
    <location>
        <position position="24"/>
    </location>
</feature>
<feature type="modified residue" description="N6-lactoyllysine; alternate" evidence="4">
    <location>
        <position position="24"/>
    </location>
</feature>
<feature type="modified residue" description="N6-methyllysine; alternate" evidence="4">
    <location>
        <position position="24"/>
    </location>
</feature>
<feature type="modified residue" description="Citrulline" evidence="4">
    <location>
        <position position="27"/>
    </location>
</feature>
<feature type="modified residue" description="N6,N6,N6-trimethyllysine; alternate" evidence="4">
    <location>
        <position position="28"/>
    </location>
</feature>
<feature type="modified residue" description="N6,N6-dimethyllysine; alternate" evidence="4">
    <location>
        <position position="28"/>
    </location>
</feature>
<feature type="modified residue" description="N6-(2-hydroxyisobutyryl)lysine; alternate" evidence="2">
    <location>
        <position position="28"/>
    </location>
</feature>
<feature type="modified residue" description="N6-acetyllysine; alternate" evidence="4">
    <location>
        <position position="28"/>
    </location>
</feature>
<feature type="modified residue" description="N6-crotonyllysine; alternate" evidence="4">
    <location>
        <position position="28"/>
    </location>
</feature>
<feature type="modified residue" description="N6-glutaryllysine; alternate" evidence="4">
    <location>
        <position position="28"/>
    </location>
</feature>
<feature type="modified residue" description="N6-lactoyllysine; alternate" evidence="4">
    <location>
        <position position="28"/>
    </location>
</feature>
<feature type="modified residue" description="N6-methyllysine; alternate" evidence="4">
    <location>
        <position position="28"/>
    </location>
</feature>
<feature type="modified residue" description="ADP-ribosylserine; alternate" evidence="2">
    <location>
        <position position="29"/>
    </location>
</feature>
<feature type="modified residue" description="Phosphoserine; alternate; by AURKB, AURKC and RPS6KA5" evidence="7">
    <location>
        <position position="29"/>
    </location>
</feature>
<feature type="modified residue" description="Phosphoserine" evidence="4">
    <location>
        <position position="32"/>
    </location>
</feature>
<feature type="modified residue" description="N6,N6,N6-trimethyllysine; alternate" evidence="4">
    <location>
        <position position="37"/>
    </location>
</feature>
<feature type="modified residue" description="N6,N6-dimethyllysine; alternate" evidence="4">
    <location>
        <position position="37"/>
    </location>
</feature>
<feature type="modified residue" description="N6-(2-hydroxyisobutyryl)lysine; alternate" evidence="2">
    <location>
        <position position="37"/>
    </location>
</feature>
<feature type="modified residue" description="N6-acetyllysine; alternate" evidence="4">
    <location>
        <position position="37"/>
    </location>
</feature>
<feature type="modified residue" description="N6-methyllysine; alternate" evidence="4">
    <location>
        <position position="37"/>
    </location>
</feature>
<feature type="modified residue" description="N6-methyllysine" evidence="2">
    <location>
        <position position="38"/>
    </location>
</feature>
<feature type="modified residue" description="Phosphotyrosine" evidence="4">
    <location>
        <position position="42"/>
    </location>
</feature>
<feature type="modified residue" description="N6,N6,N6-trimethyllysine; alternate" evidence="4">
    <location>
        <position position="57"/>
    </location>
</feature>
<feature type="modified residue" description="N6-(2-hydroxyisobutyryl)lysine; alternate" evidence="2">
    <location>
        <position position="57"/>
    </location>
</feature>
<feature type="modified residue" description="N6-(beta-hydroxybutyryl)lysine; alternate" evidence="3">
    <location>
        <position position="57"/>
    </location>
</feature>
<feature type="modified residue" description="N6-acetyllysine; alternate" evidence="4">
    <location>
        <position position="57"/>
    </location>
</feature>
<feature type="modified residue" description="N6-crotonyllysine; alternate" evidence="4">
    <location>
        <position position="57"/>
    </location>
</feature>
<feature type="modified residue" description="N6-glutaryllysine; alternate" evidence="4">
    <location>
        <position position="57"/>
    </location>
</feature>
<feature type="modified residue" description="N6-lactoyllysine; alternate" evidence="5">
    <location>
        <position position="57"/>
    </location>
</feature>
<feature type="modified residue" description="N6-methyllysine; by EHMT2; alternate" evidence="4">
    <location>
        <position position="57"/>
    </location>
</feature>
<feature type="modified residue" description="N6-succinyllysine; alternate" evidence="4">
    <location>
        <position position="57"/>
    </location>
</feature>
<feature type="modified residue" description="Phosphoserine" evidence="4">
    <location>
        <position position="58"/>
    </location>
</feature>
<feature type="modified residue" description="N6-(2-hydroxyisobutyryl)lysine; alternate" evidence="2">
    <location>
        <position position="65"/>
    </location>
</feature>
<feature type="modified residue" description="N6-methyllysine; alternate" evidence="4">
    <location>
        <position position="65"/>
    </location>
</feature>
<feature type="modified residue" description="N6,N6,N6-trimethyllysine; alternate" evidence="5">
    <location>
        <position position="80"/>
    </location>
</feature>
<feature type="modified residue" description="N6,N6-dimethyllysine; alternate" evidence="4">
    <location>
        <position position="80"/>
    </location>
</feature>
<feature type="modified residue" description="N6-(2-hydroxyisobutyryl)lysine; alternate" evidence="2">
    <location>
        <position position="80"/>
    </location>
</feature>
<feature type="modified residue" description="N6-acetyllysine; alternate" evidence="4">
    <location>
        <position position="80"/>
    </location>
</feature>
<feature type="modified residue" description="N6-glutaryllysine; alternate" evidence="4">
    <location>
        <position position="80"/>
    </location>
</feature>
<feature type="modified residue" description="N6-lactoyllysine; alternate" evidence="4">
    <location>
        <position position="80"/>
    </location>
</feature>
<feature type="modified residue" description="N6-methyllysine; alternate" evidence="4">
    <location>
        <position position="80"/>
    </location>
</feature>
<feature type="modified residue" description="N6-succinyllysine; alternate" evidence="4">
    <location>
        <position position="80"/>
    </location>
</feature>
<feature type="modified residue" description="Phosphothreonine" evidence="4">
    <location>
        <position position="81"/>
    </location>
</feature>
<feature type="modified residue" description="Phosphoserine" evidence="4">
    <location>
        <position position="87"/>
    </location>
</feature>
<feature type="modified residue" description="Phosphothreonine" evidence="8">
    <location>
        <position position="108"/>
    </location>
</feature>
<feature type="modified residue" description="N6-acetyllysine; alternate" evidence="4">
    <location>
        <position position="116"/>
    </location>
</feature>
<feature type="modified residue" description="N6-glutaryllysine; alternate" evidence="4">
    <location>
        <position position="116"/>
    </location>
</feature>
<feature type="modified residue" description="N6-(2-hydroxyisobutyryl)lysine; alternate" evidence="2">
    <location>
        <position position="123"/>
    </location>
</feature>
<feature type="modified residue" description="N6-acetyllysine; alternate" evidence="4">
    <location>
        <position position="123"/>
    </location>
</feature>
<feature type="modified residue" description="N6-glutaryllysine; alternate" evidence="4">
    <location>
        <position position="123"/>
    </location>
</feature>
<feature type="modified residue" description="N6-methyllysine; alternate" evidence="4">
    <location>
        <position position="123"/>
    </location>
</feature>
<feature type="modified residue" description="N6-succinyllysine; alternate" evidence="4">
    <location>
        <position position="123"/>
    </location>
</feature>
<feature type="lipid moiety-binding region" description="N6-decanoyllysine" evidence="4">
    <location>
        <position position="19"/>
    </location>
</feature>
<evidence type="ECO:0000250" key="1"/>
<evidence type="ECO:0000250" key="2">
    <source>
        <dbReference type="UniProtKB" id="P68431"/>
    </source>
</evidence>
<evidence type="ECO:0000250" key="3">
    <source>
        <dbReference type="UniProtKB" id="P68433"/>
    </source>
</evidence>
<evidence type="ECO:0000250" key="4">
    <source>
        <dbReference type="UniProtKB" id="P84243"/>
    </source>
</evidence>
<evidence type="ECO:0000250" key="5">
    <source>
        <dbReference type="UniProtKB" id="P84244"/>
    </source>
</evidence>
<evidence type="ECO:0000250" key="6">
    <source>
        <dbReference type="UniProtKB" id="P84245"/>
    </source>
</evidence>
<evidence type="ECO:0000250" key="7">
    <source>
        <dbReference type="UniProtKB" id="Q5E9F8"/>
    </source>
</evidence>
<evidence type="ECO:0000250" key="8">
    <source>
        <dbReference type="UniProtKB" id="Q71DI3"/>
    </source>
</evidence>
<evidence type="ECO:0000256" key="9">
    <source>
        <dbReference type="SAM" id="MobiDB-lite"/>
    </source>
</evidence>
<evidence type="ECO:0000305" key="10"/>
<protein>
    <recommendedName>
        <fullName>Histone H3.3</fullName>
    </recommendedName>
</protein>
<gene>
    <name evidence="4" type="primary">H3-3A</name>
    <name type="synonym">H3F3A</name>
</gene>
<reference key="1">
    <citation type="submission" date="2002-01" db="EMBL/GenBank/DDBJ databases">
        <title>cDNA cloning of pig histone H3.3A by yeast one-hybrid.</title>
        <authorList>
            <person name="Kokuho T."/>
        </authorList>
    </citation>
    <scope>NUCLEOTIDE SEQUENCE [MRNA]</scope>
</reference>
<keyword id="KW-0007">Acetylation</keyword>
<keyword id="KW-0013">ADP-ribosylation</keyword>
<keyword id="KW-0158">Chromosome</keyword>
<keyword id="KW-0164">Citrullination</keyword>
<keyword id="KW-0238">DNA-binding</keyword>
<keyword id="KW-0379">Hydroxylation</keyword>
<keyword id="KW-0449">Lipoprotein</keyword>
<keyword id="KW-0488">Methylation</keyword>
<keyword id="KW-0544">Nucleosome core</keyword>
<keyword id="KW-0539">Nucleus</keyword>
<keyword id="KW-0597">Phosphoprotein</keyword>
<keyword id="KW-1185">Reference proteome</keyword>
<keyword id="KW-0832">Ubl conjugation</keyword>